<name>CYB6_ORYNI</name>
<keyword id="KW-0150">Chloroplast</keyword>
<keyword id="KW-0249">Electron transport</keyword>
<keyword id="KW-0349">Heme</keyword>
<keyword id="KW-0408">Iron</keyword>
<keyword id="KW-0472">Membrane</keyword>
<keyword id="KW-0479">Metal-binding</keyword>
<keyword id="KW-0602">Photosynthesis</keyword>
<keyword id="KW-0934">Plastid</keyword>
<keyword id="KW-1185">Reference proteome</keyword>
<keyword id="KW-0793">Thylakoid</keyword>
<keyword id="KW-0812">Transmembrane</keyword>
<keyword id="KW-1133">Transmembrane helix</keyword>
<keyword id="KW-0813">Transport</keyword>
<evidence type="ECO:0000255" key="1">
    <source>
        <dbReference type="HAMAP-Rule" id="MF_00633"/>
    </source>
</evidence>
<evidence type="ECO:0000312" key="2">
    <source>
        <dbReference type="Proteomes" id="UP000006591"/>
    </source>
</evidence>
<organism>
    <name type="scientific">Oryza nivara</name>
    <name type="common">Indian wild rice</name>
    <name type="synonym">Oryza sativa f. spontanea</name>
    <dbReference type="NCBI Taxonomy" id="4536"/>
    <lineage>
        <taxon>Eukaryota</taxon>
        <taxon>Viridiplantae</taxon>
        <taxon>Streptophyta</taxon>
        <taxon>Embryophyta</taxon>
        <taxon>Tracheophyta</taxon>
        <taxon>Spermatophyta</taxon>
        <taxon>Magnoliopsida</taxon>
        <taxon>Liliopsida</taxon>
        <taxon>Poales</taxon>
        <taxon>Poaceae</taxon>
        <taxon>BOP clade</taxon>
        <taxon>Oryzoideae</taxon>
        <taxon>Oryzeae</taxon>
        <taxon>Oryzinae</taxon>
        <taxon>Oryza</taxon>
    </lineage>
</organism>
<comment type="function">
    <text evidence="1">Component of the cytochrome b6-f complex, which mediates electron transfer between photosystem II (PSII) and photosystem I (PSI), cyclic electron flow around PSI, and state transitions.</text>
</comment>
<comment type="cofactor">
    <cofactor evidence="1">
        <name>heme b</name>
        <dbReference type="ChEBI" id="CHEBI:60344"/>
    </cofactor>
    <text evidence="1">Binds 2 heme b groups non-covalently with two histidine residues as axial ligands.</text>
</comment>
<comment type="cofactor">
    <cofactor evidence="1">
        <name>heme c</name>
        <dbReference type="ChEBI" id="CHEBI:61717"/>
    </cofactor>
    <text evidence="1">Binds one heme group covalently by a single cysteine link with no axial amino acid ligand. This heme was named heme ci.</text>
</comment>
<comment type="subunit">
    <text evidence="1">The 4 large subunits of the cytochrome b6-f complex are cytochrome b6, subunit IV (17 kDa polypeptide, PetD), cytochrome f and the Rieske protein, while the 4 small subunits are PetG, PetL, PetM and PetN. The complex functions as a dimer.</text>
</comment>
<comment type="subcellular location">
    <subcellularLocation>
        <location evidence="1">Plastid</location>
        <location evidence="1">Chloroplast thylakoid membrane</location>
        <topology evidence="1">Multi-pass membrane protein</topology>
    </subcellularLocation>
</comment>
<comment type="miscellaneous">
    <text evidence="1">Heme 1 (or BH or b566) is high-potential and absorbs at about 566 nm, and heme 2 (or BL or b562) is low-potential and absorbs at about 562 nm.</text>
</comment>
<comment type="similarity">
    <text evidence="1">Belongs to the cytochrome b family. PetB subfamily.</text>
</comment>
<dbReference type="EMBL" id="AP006728">
    <property type="protein sequence ID" value="BAD26808.1"/>
    <property type="molecule type" value="Genomic_DNA"/>
</dbReference>
<dbReference type="RefSeq" id="YP_052779.1">
    <property type="nucleotide sequence ID" value="NC_005973.1"/>
</dbReference>
<dbReference type="SMR" id="Q6ENE4"/>
<dbReference type="STRING" id="4536.Q6ENE4"/>
<dbReference type="GeneID" id="2885884"/>
<dbReference type="Proteomes" id="UP000006591">
    <property type="component" value="Chloroplast"/>
</dbReference>
<dbReference type="GO" id="GO:0009535">
    <property type="term" value="C:chloroplast thylakoid membrane"/>
    <property type="evidence" value="ECO:0007669"/>
    <property type="project" value="UniProtKB-SubCell"/>
</dbReference>
<dbReference type="GO" id="GO:0009536">
    <property type="term" value="C:plastid"/>
    <property type="evidence" value="ECO:0000305"/>
    <property type="project" value="Gramene"/>
</dbReference>
<dbReference type="GO" id="GO:0045158">
    <property type="term" value="F:electron transporter, transferring electrons within cytochrome b6/f complex of photosystem II activity"/>
    <property type="evidence" value="ECO:0007669"/>
    <property type="project" value="UniProtKB-UniRule"/>
</dbReference>
<dbReference type="GO" id="GO:0046872">
    <property type="term" value="F:metal ion binding"/>
    <property type="evidence" value="ECO:0007669"/>
    <property type="project" value="UniProtKB-KW"/>
</dbReference>
<dbReference type="GO" id="GO:0016491">
    <property type="term" value="F:oxidoreductase activity"/>
    <property type="evidence" value="ECO:0007669"/>
    <property type="project" value="InterPro"/>
</dbReference>
<dbReference type="GO" id="GO:0015979">
    <property type="term" value="P:photosynthesis"/>
    <property type="evidence" value="ECO:0007669"/>
    <property type="project" value="UniProtKB-UniRule"/>
</dbReference>
<dbReference type="GO" id="GO:0022904">
    <property type="term" value="P:respiratory electron transport chain"/>
    <property type="evidence" value="ECO:0007669"/>
    <property type="project" value="InterPro"/>
</dbReference>
<dbReference type="CDD" id="cd00284">
    <property type="entry name" value="Cytochrome_b_N"/>
    <property type="match status" value="1"/>
</dbReference>
<dbReference type="FunFam" id="1.20.810.10:FF:000001">
    <property type="entry name" value="Cytochrome b6"/>
    <property type="match status" value="1"/>
</dbReference>
<dbReference type="Gene3D" id="1.20.810.10">
    <property type="entry name" value="Cytochrome Bc1 Complex, Chain C"/>
    <property type="match status" value="1"/>
</dbReference>
<dbReference type="HAMAP" id="MF_00633">
    <property type="entry name" value="Cytb6_f_cytb6"/>
    <property type="match status" value="1"/>
</dbReference>
<dbReference type="InterPro" id="IPR005797">
    <property type="entry name" value="Cyt_b/b6_N"/>
</dbReference>
<dbReference type="InterPro" id="IPR023530">
    <property type="entry name" value="Cyt_B6_PetB"/>
</dbReference>
<dbReference type="InterPro" id="IPR027387">
    <property type="entry name" value="Cytb/b6-like_sf"/>
</dbReference>
<dbReference type="InterPro" id="IPR048259">
    <property type="entry name" value="Cytochrome_b_N_euk/bac"/>
</dbReference>
<dbReference type="InterPro" id="IPR016174">
    <property type="entry name" value="Di-haem_cyt_TM"/>
</dbReference>
<dbReference type="NCBIfam" id="NF002990">
    <property type="entry name" value="PRK03735.1"/>
    <property type="match status" value="1"/>
</dbReference>
<dbReference type="PANTHER" id="PTHR19271">
    <property type="entry name" value="CYTOCHROME B"/>
    <property type="match status" value="1"/>
</dbReference>
<dbReference type="PANTHER" id="PTHR19271:SF16">
    <property type="entry name" value="CYTOCHROME B"/>
    <property type="match status" value="1"/>
</dbReference>
<dbReference type="Pfam" id="PF00033">
    <property type="entry name" value="Cytochrome_B"/>
    <property type="match status" value="1"/>
</dbReference>
<dbReference type="PIRSF" id="PIRSF000032">
    <property type="entry name" value="Cytochrome_b6"/>
    <property type="match status" value="1"/>
</dbReference>
<dbReference type="SUPFAM" id="SSF81342">
    <property type="entry name" value="Transmembrane di-heme cytochromes"/>
    <property type="match status" value="1"/>
</dbReference>
<dbReference type="PROSITE" id="PS51002">
    <property type="entry name" value="CYTB_NTER"/>
    <property type="match status" value="1"/>
</dbReference>
<sequence>MSKVYDWFEERLEIQAIADDITSKYVPPHVNIFYCLGGITLTCFLVQVATGFAMTFYYRPTVTEAFSSVQYIMTEANFGWLIRSVHRWSASMMVLMMILHVFRVYLTGGFKKPRELTWVTGVVLAVLTASFGVTGYSLPWDQIGYWAVKIVTGVPDAIPVIGSPLVELLRGSASVGQSTLTRFYSLHTFVLPLLTAVFMLMHFLMIRKQGISGPL</sequence>
<geneLocation type="chloroplast"/>
<accession>Q6ENE4</accession>
<reference key="1">
    <citation type="journal article" date="2004" name="Gene">
        <title>The complete nucleotide sequence of wild rice (Oryza nivara) chloroplast genome: first genome wide comparative sequence analysis of wild and cultivated rice.</title>
        <authorList>
            <person name="Masood M.S."/>
            <person name="Nishikawa T."/>
            <person name="Fukuoka S."/>
            <person name="Njenga P.K."/>
            <person name="Tsudzuki T."/>
            <person name="Kadowaki K."/>
        </authorList>
    </citation>
    <scope>NUCLEOTIDE SEQUENCE [LARGE SCALE GENOMIC DNA]</scope>
    <source>
        <strain evidence="2">cv. SL10</strain>
    </source>
</reference>
<proteinExistence type="inferred from homology"/>
<gene>
    <name evidence="1" type="primary">petB</name>
</gene>
<feature type="chain" id="PRO_0000061808" description="Cytochrome b6">
    <location>
        <begin position="1"/>
        <end position="215"/>
    </location>
</feature>
<feature type="transmembrane region" description="Helical" evidence="1">
    <location>
        <begin position="32"/>
        <end position="52"/>
    </location>
</feature>
<feature type="transmembrane region" description="Helical" evidence="1">
    <location>
        <begin position="90"/>
        <end position="110"/>
    </location>
</feature>
<feature type="transmembrane region" description="Helical" evidence="1">
    <location>
        <begin position="116"/>
        <end position="136"/>
    </location>
</feature>
<feature type="transmembrane region" description="Helical" evidence="1">
    <location>
        <begin position="186"/>
        <end position="206"/>
    </location>
</feature>
<feature type="binding site" description="covalent" evidence="1">
    <location>
        <position position="35"/>
    </location>
    <ligand>
        <name>heme c</name>
        <dbReference type="ChEBI" id="CHEBI:61717"/>
    </ligand>
</feature>
<feature type="binding site" description="axial binding residue" evidence="1">
    <location>
        <position position="86"/>
    </location>
    <ligand>
        <name>heme b</name>
        <dbReference type="ChEBI" id="CHEBI:60344"/>
        <label>2</label>
    </ligand>
    <ligandPart>
        <name>Fe</name>
        <dbReference type="ChEBI" id="CHEBI:18248"/>
    </ligandPart>
</feature>
<feature type="binding site" description="axial binding residue" evidence="1">
    <location>
        <position position="100"/>
    </location>
    <ligand>
        <name>heme b</name>
        <dbReference type="ChEBI" id="CHEBI:60344"/>
        <label>1</label>
    </ligand>
    <ligandPart>
        <name>Fe</name>
        <dbReference type="ChEBI" id="CHEBI:18248"/>
    </ligandPart>
</feature>
<feature type="binding site" description="axial binding residue" evidence="1">
    <location>
        <position position="187"/>
    </location>
    <ligand>
        <name>heme b</name>
        <dbReference type="ChEBI" id="CHEBI:60344"/>
        <label>2</label>
    </ligand>
    <ligandPart>
        <name>Fe</name>
        <dbReference type="ChEBI" id="CHEBI:18248"/>
    </ligandPart>
</feature>
<feature type="binding site" description="axial binding residue" evidence="1">
    <location>
        <position position="202"/>
    </location>
    <ligand>
        <name>heme b</name>
        <dbReference type="ChEBI" id="CHEBI:60344"/>
        <label>1</label>
    </ligand>
    <ligandPart>
        <name>Fe</name>
        <dbReference type="ChEBI" id="CHEBI:18248"/>
    </ligandPart>
</feature>
<protein>
    <recommendedName>
        <fullName evidence="1">Cytochrome b6</fullName>
    </recommendedName>
</protein>